<organism>
    <name type="scientific">Escherichia coli (strain 55989 / EAEC)</name>
    <dbReference type="NCBI Taxonomy" id="585055"/>
    <lineage>
        <taxon>Bacteria</taxon>
        <taxon>Pseudomonadati</taxon>
        <taxon>Pseudomonadota</taxon>
        <taxon>Gammaproteobacteria</taxon>
        <taxon>Enterobacterales</taxon>
        <taxon>Enterobacteriaceae</taxon>
        <taxon>Escherichia</taxon>
    </lineage>
</organism>
<reference key="1">
    <citation type="journal article" date="2009" name="PLoS Genet.">
        <title>Organised genome dynamics in the Escherichia coli species results in highly diverse adaptive paths.</title>
        <authorList>
            <person name="Touchon M."/>
            <person name="Hoede C."/>
            <person name="Tenaillon O."/>
            <person name="Barbe V."/>
            <person name="Baeriswyl S."/>
            <person name="Bidet P."/>
            <person name="Bingen E."/>
            <person name="Bonacorsi S."/>
            <person name="Bouchier C."/>
            <person name="Bouvet O."/>
            <person name="Calteau A."/>
            <person name="Chiapello H."/>
            <person name="Clermont O."/>
            <person name="Cruveiller S."/>
            <person name="Danchin A."/>
            <person name="Diard M."/>
            <person name="Dossat C."/>
            <person name="Karoui M.E."/>
            <person name="Frapy E."/>
            <person name="Garry L."/>
            <person name="Ghigo J.M."/>
            <person name="Gilles A.M."/>
            <person name="Johnson J."/>
            <person name="Le Bouguenec C."/>
            <person name="Lescat M."/>
            <person name="Mangenot S."/>
            <person name="Martinez-Jehanne V."/>
            <person name="Matic I."/>
            <person name="Nassif X."/>
            <person name="Oztas S."/>
            <person name="Petit M.A."/>
            <person name="Pichon C."/>
            <person name="Rouy Z."/>
            <person name="Ruf C.S."/>
            <person name="Schneider D."/>
            <person name="Tourret J."/>
            <person name="Vacherie B."/>
            <person name="Vallenet D."/>
            <person name="Medigue C."/>
            <person name="Rocha E.P.C."/>
            <person name="Denamur E."/>
        </authorList>
    </citation>
    <scope>NUCLEOTIDE SEQUENCE [LARGE SCALE GENOMIC DNA]</scope>
    <source>
        <strain>55989 / EAEC</strain>
    </source>
</reference>
<keyword id="KW-0131">Cell cycle</keyword>
<keyword id="KW-0132">Cell division</keyword>
<keyword id="KW-0175">Coiled coil</keyword>
<keyword id="KW-0963">Cytoplasm</keyword>
<keyword id="KW-1185">Reference proteome</keyword>
<keyword id="KW-0717">Septation</keyword>
<proteinExistence type="inferred from homology"/>
<feature type="chain" id="PRO_1000189508" description="Cell division protein ZapA">
    <location>
        <begin position="1"/>
        <end position="109"/>
    </location>
</feature>
<feature type="coiled-coil region" evidence="1">
    <location>
        <begin position="21"/>
        <end position="99"/>
    </location>
</feature>
<name>ZAPA_ECO55</name>
<gene>
    <name evidence="1" type="primary">zapA</name>
    <name type="ordered locus">EC55989_3198</name>
</gene>
<comment type="function">
    <text evidence="1">Activator of cell division through the inhibition of FtsZ GTPase activity, therefore promoting FtsZ assembly into bundles of protofilaments necessary for the formation of the division Z ring. It is recruited early at mid-cell but it is not essential for cell division.</text>
</comment>
<comment type="subunit">
    <text evidence="1">Homodimer. Interacts with FtsZ.</text>
</comment>
<comment type="subcellular location">
    <subcellularLocation>
        <location evidence="1">Cytoplasm</location>
    </subcellularLocation>
    <text evidence="1">Localizes at mid-cell.</text>
</comment>
<comment type="similarity">
    <text evidence="1">Belongs to the ZapA family. Type 1 subfamily.</text>
</comment>
<dbReference type="EMBL" id="CU928145">
    <property type="protein sequence ID" value="CAU99168.1"/>
    <property type="molecule type" value="Genomic_DNA"/>
</dbReference>
<dbReference type="RefSeq" id="WP_001276008.1">
    <property type="nucleotide sequence ID" value="NZ_CP028304.1"/>
</dbReference>
<dbReference type="SMR" id="B7LFG9"/>
<dbReference type="GeneID" id="93779091"/>
<dbReference type="KEGG" id="eck:EC55989_3198"/>
<dbReference type="HOGENOM" id="CLU_116623_3_0_6"/>
<dbReference type="Proteomes" id="UP000000746">
    <property type="component" value="Chromosome"/>
</dbReference>
<dbReference type="GO" id="GO:0032153">
    <property type="term" value="C:cell division site"/>
    <property type="evidence" value="ECO:0007669"/>
    <property type="project" value="TreeGrafter"/>
</dbReference>
<dbReference type="GO" id="GO:0030428">
    <property type="term" value="C:cell septum"/>
    <property type="evidence" value="ECO:0007669"/>
    <property type="project" value="TreeGrafter"/>
</dbReference>
<dbReference type="GO" id="GO:0005829">
    <property type="term" value="C:cytosol"/>
    <property type="evidence" value="ECO:0007669"/>
    <property type="project" value="TreeGrafter"/>
</dbReference>
<dbReference type="GO" id="GO:0005886">
    <property type="term" value="C:plasma membrane"/>
    <property type="evidence" value="ECO:0007669"/>
    <property type="project" value="UniProtKB-UniRule"/>
</dbReference>
<dbReference type="GO" id="GO:0000917">
    <property type="term" value="P:division septum assembly"/>
    <property type="evidence" value="ECO:0007669"/>
    <property type="project" value="UniProtKB-KW"/>
</dbReference>
<dbReference type="GO" id="GO:0043093">
    <property type="term" value="P:FtsZ-dependent cytokinesis"/>
    <property type="evidence" value="ECO:0007669"/>
    <property type="project" value="TreeGrafter"/>
</dbReference>
<dbReference type="GO" id="GO:0000921">
    <property type="term" value="P:septin ring assembly"/>
    <property type="evidence" value="ECO:0007669"/>
    <property type="project" value="TreeGrafter"/>
</dbReference>
<dbReference type="FunFam" id="1.20.5.50:FF:000001">
    <property type="entry name" value="Cell division protein ZapA"/>
    <property type="match status" value="1"/>
</dbReference>
<dbReference type="FunFam" id="3.30.160.880:FF:000001">
    <property type="entry name" value="Cell division protein ZapA"/>
    <property type="match status" value="1"/>
</dbReference>
<dbReference type="Gene3D" id="1.20.5.50">
    <property type="match status" value="1"/>
</dbReference>
<dbReference type="Gene3D" id="3.30.160.880">
    <property type="entry name" value="Cell division protein ZapA protomer, N-terminal domain"/>
    <property type="match status" value="1"/>
</dbReference>
<dbReference type="HAMAP" id="MF_02012">
    <property type="entry name" value="ZapA_type1"/>
    <property type="match status" value="1"/>
</dbReference>
<dbReference type="InterPro" id="IPR007838">
    <property type="entry name" value="Cell_div_ZapA-like"/>
</dbReference>
<dbReference type="InterPro" id="IPR036192">
    <property type="entry name" value="Cell_div_ZapA-like_sf"/>
</dbReference>
<dbReference type="InterPro" id="IPR023771">
    <property type="entry name" value="Cell_div_ZapA_eubact"/>
</dbReference>
<dbReference type="InterPro" id="IPR042233">
    <property type="entry name" value="Cell_div_ZapA_N"/>
</dbReference>
<dbReference type="NCBIfam" id="NF008209">
    <property type="entry name" value="PRK10972.1"/>
    <property type="match status" value="1"/>
</dbReference>
<dbReference type="PANTHER" id="PTHR34981">
    <property type="entry name" value="CELL DIVISION PROTEIN ZAPA"/>
    <property type="match status" value="1"/>
</dbReference>
<dbReference type="PANTHER" id="PTHR34981:SF1">
    <property type="entry name" value="CELL DIVISION PROTEIN ZAPA"/>
    <property type="match status" value="1"/>
</dbReference>
<dbReference type="Pfam" id="PF05164">
    <property type="entry name" value="ZapA"/>
    <property type="match status" value="1"/>
</dbReference>
<dbReference type="SUPFAM" id="SSF102829">
    <property type="entry name" value="Cell division protein ZapA-like"/>
    <property type="match status" value="1"/>
</dbReference>
<accession>B7LFG9</accession>
<sequence length="109" mass="12594">MSAQPVDIQIFGRSLRVNCPPDQRDALNQAADDLNQRLQDLKERTRVTNTEQLVFIAALNISYELAQEKAKTRDYAASMEQRIRMLQQTIEQALLEQGRITEKTNQNFE</sequence>
<evidence type="ECO:0000255" key="1">
    <source>
        <dbReference type="HAMAP-Rule" id="MF_02012"/>
    </source>
</evidence>
<protein>
    <recommendedName>
        <fullName evidence="1">Cell division protein ZapA</fullName>
    </recommendedName>
    <alternativeName>
        <fullName evidence="1">Z ring-associated protein ZapA</fullName>
    </alternativeName>
</protein>